<feature type="chain" id="PRO_0000331792" description="Methionine--tRNA ligase">
    <location>
        <begin position="1"/>
        <end position="725"/>
    </location>
</feature>
<feature type="domain" description="tRNA-binding" evidence="1">
    <location>
        <begin position="619"/>
        <end position="725"/>
    </location>
</feature>
<feature type="short sequence motif" description="'HIGH' region">
    <location>
        <begin position="27"/>
        <end position="37"/>
    </location>
</feature>
<feature type="short sequence motif" description="'KMSKS' region">
    <location>
        <begin position="348"/>
        <end position="352"/>
    </location>
</feature>
<feature type="binding site" evidence="1">
    <location>
        <position position="158"/>
    </location>
    <ligand>
        <name>Zn(2+)</name>
        <dbReference type="ChEBI" id="CHEBI:29105"/>
    </ligand>
</feature>
<feature type="binding site" evidence="1">
    <location>
        <position position="161"/>
    </location>
    <ligand>
        <name>Zn(2+)</name>
        <dbReference type="ChEBI" id="CHEBI:29105"/>
    </ligand>
</feature>
<feature type="binding site" evidence="1">
    <location>
        <position position="171"/>
    </location>
    <ligand>
        <name>Zn(2+)</name>
        <dbReference type="ChEBI" id="CHEBI:29105"/>
    </ligand>
</feature>
<feature type="binding site" evidence="1">
    <location>
        <position position="174"/>
    </location>
    <ligand>
        <name>Zn(2+)</name>
        <dbReference type="ChEBI" id="CHEBI:29105"/>
    </ligand>
</feature>
<feature type="binding site" evidence="1">
    <location>
        <position position="351"/>
    </location>
    <ligand>
        <name>ATP</name>
        <dbReference type="ChEBI" id="CHEBI:30616"/>
    </ligand>
</feature>
<dbReference type="EC" id="6.1.1.10" evidence="1"/>
<dbReference type="EMBL" id="CP000526">
    <property type="protein sequence ID" value="ABM49580.1"/>
    <property type="status" value="ALT_INIT"/>
    <property type="molecule type" value="Genomic_DNA"/>
</dbReference>
<dbReference type="RefSeq" id="WP_011203868.1">
    <property type="nucleotide sequence ID" value="NC_008785.1"/>
</dbReference>
<dbReference type="SMR" id="A1V5W0"/>
<dbReference type="GeneID" id="92978470"/>
<dbReference type="KEGG" id="bmv:BMASAVP1_A2304"/>
<dbReference type="HOGENOM" id="CLU_009710_7_0_4"/>
<dbReference type="GO" id="GO:0005829">
    <property type="term" value="C:cytosol"/>
    <property type="evidence" value="ECO:0007669"/>
    <property type="project" value="TreeGrafter"/>
</dbReference>
<dbReference type="GO" id="GO:0005524">
    <property type="term" value="F:ATP binding"/>
    <property type="evidence" value="ECO:0007669"/>
    <property type="project" value="UniProtKB-UniRule"/>
</dbReference>
<dbReference type="GO" id="GO:0046872">
    <property type="term" value="F:metal ion binding"/>
    <property type="evidence" value="ECO:0007669"/>
    <property type="project" value="UniProtKB-KW"/>
</dbReference>
<dbReference type="GO" id="GO:0004825">
    <property type="term" value="F:methionine-tRNA ligase activity"/>
    <property type="evidence" value="ECO:0007669"/>
    <property type="project" value="UniProtKB-UniRule"/>
</dbReference>
<dbReference type="GO" id="GO:0000049">
    <property type="term" value="F:tRNA binding"/>
    <property type="evidence" value="ECO:0007669"/>
    <property type="project" value="UniProtKB-KW"/>
</dbReference>
<dbReference type="GO" id="GO:0006431">
    <property type="term" value="P:methionyl-tRNA aminoacylation"/>
    <property type="evidence" value="ECO:0007669"/>
    <property type="project" value="UniProtKB-UniRule"/>
</dbReference>
<dbReference type="CDD" id="cd07957">
    <property type="entry name" value="Anticodon_Ia_Met"/>
    <property type="match status" value="1"/>
</dbReference>
<dbReference type="CDD" id="cd00814">
    <property type="entry name" value="MetRS_core"/>
    <property type="match status" value="1"/>
</dbReference>
<dbReference type="CDD" id="cd02800">
    <property type="entry name" value="tRNA_bind_EcMetRS_like"/>
    <property type="match status" value="1"/>
</dbReference>
<dbReference type="FunFam" id="2.20.28.20:FF:000001">
    <property type="entry name" value="Methionine--tRNA ligase"/>
    <property type="match status" value="1"/>
</dbReference>
<dbReference type="FunFam" id="2.40.50.140:FF:000042">
    <property type="entry name" value="Methionine--tRNA ligase"/>
    <property type="match status" value="1"/>
</dbReference>
<dbReference type="Gene3D" id="3.40.50.620">
    <property type="entry name" value="HUPs"/>
    <property type="match status" value="1"/>
</dbReference>
<dbReference type="Gene3D" id="1.10.730.10">
    <property type="entry name" value="Isoleucyl-tRNA Synthetase, Domain 1"/>
    <property type="match status" value="1"/>
</dbReference>
<dbReference type="Gene3D" id="2.20.28.20">
    <property type="entry name" value="Methionyl-tRNA synthetase, Zn-domain"/>
    <property type="match status" value="1"/>
</dbReference>
<dbReference type="Gene3D" id="2.40.50.140">
    <property type="entry name" value="Nucleic acid-binding proteins"/>
    <property type="match status" value="1"/>
</dbReference>
<dbReference type="HAMAP" id="MF_00098">
    <property type="entry name" value="Met_tRNA_synth_type1"/>
    <property type="match status" value="1"/>
</dbReference>
<dbReference type="InterPro" id="IPR001412">
    <property type="entry name" value="aa-tRNA-synth_I_CS"/>
</dbReference>
<dbReference type="InterPro" id="IPR041872">
    <property type="entry name" value="Anticodon_Met"/>
</dbReference>
<dbReference type="InterPro" id="IPR004495">
    <property type="entry name" value="Met-tRNA-synth_bsu_C"/>
</dbReference>
<dbReference type="InterPro" id="IPR023458">
    <property type="entry name" value="Met-tRNA_ligase_1"/>
</dbReference>
<dbReference type="InterPro" id="IPR014758">
    <property type="entry name" value="Met-tRNA_synth"/>
</dbReference>
<dbReference type="InterPro" id="IPR015413">
    <property type="entry name" value="Methionyl/Leucyl_tRNA_Synth"/>
</dbReference>
<dbReference type="InterPro" id="IPR033911">
    <property type="entry name" value="MetRS_core"/>
</dbReference>
<dbReference type="InterPro" id="IPR029038">
    <property type="entry name" value="MetRS_Zn"/>
</dbReference>
<dbReference type="InterPro" id="IPR012340">
    <property type="entry name" value="NA-bd_OB-fold"/>
</dbReference>
<dbReference type="InterPro" id="IPR014729">
    <property type="entry name" value="Rossmann-like_a/b/a_fold"/>
</dbReference>
<dbReference type="InterPro" id="IPR002547">
    <property type="entry name" value="tRNA-bd_dom"/>
</dbReference>
<dbReference type="InterPro" id="IPR009080">
    <property type="entry name" value="tRNAsynth_Ia_anticodon-bd"/>
</dbReference>
<dbReference type="NCBIfam" id="TIGR00398">
    <property type="entry name" value="metG"/>
    <property type="match status" value="1"/>
</dbReference>
<dbReference type="NCBIfam" id="TIGR00399">
    <property type="entry name" value="metG_C_term"/>
    <property type="match status" value="1"/>
</dbReference>
<dbReference type="NCBIfam" id="NF001100">
    <property type="entry name" value="PRK00133.1"/>
    <property type="match status" value="1"/>
</dbReference>
<dbReference type="PANTHER" id="PTHR45765">
    <property type="entry name" value="METHIONINE--TRNA LIGASE"/>
    <property type="match status" value="1"/>
</dbReference>
<dbReference type="PANTHER" id="PTHR45765:SF1">
    <property type="entry name" value="METHIONINE--TRNA LIGASE, CYTOPLASMIC"/>
    <property type="match status" value="1"/>
</dbReference>
<dbReference type="Pfam" id="PF19303">
    <property type="entry name" value="Anticodon_3"/>
    <property type="match status" value="1"/>
</dbReference>
<dbReference type="Pfam" id="PF09334">
    <property type="entry name" value="tRNA-synt_1g"/>
    <property type="match status" value="1"/>
</dbReference>
<dbReference type="Pfam" id="PF01588">
    <property type="entry name" value="tRNA_bind"/>
    <property type="match status" value="1"/>
</dbReference>
<dbReference type="PRINTS" id="PR01041">
    <property type="entry name" value="TRNASYNTHMET"/>
</dbReference>
<dbReference type="SUPFAM" id="SSF47323">
    <property type="entry name" value="Anticodon-binding domain of a subclass of class I aminoacyl-tRNA synthetases"/>
    <property type="match status" value="1"/>
</dbReference>
<dbReference type="SUPFAM" id="SSF57770">
    <property type="entry name" value="Methionyl-tRNA synthetase (MetRS), Zn-domain"/>
    <property type="match status" value="1"/>
</dbReference>
<dbReference type="SUPFAM" id="SSF50249">
    <property type="entry name" value="Nucleic acid-binding proteins"/>
    <property type="match status" value="1"/>
</dbReference>
<dbReference type="SUPFAM" id="SSF52374">
    <property type="entry name" value="Nucleotidylyl transferase"/>
    <property type="match status" value="1"/>
</dbReference>
<dbReference type="PROSITE" id="PS00178">
    <property type="entry name" value="AA_TRNA_LIGASE_I"/>
    <property type="match status" value="1"/>
</dbReference>
<dbReference type="PROSITE" id="PS50886">
    <property type="entry name" value="TRBD"/>
    <property type="match status" value="1"/>
</dbReference>
<sequence>MSASDLTSVQAGAPQGRRQILVTSALPYANGQIHIGHLVEYIQTDIWVRTMRMHGHEIYYIGADDTHGTPVMLRAEQEGVSPKQLIERVWREHKRDFDSFGVSFDNFYTTDSDENRVLSETIYLALKEAGFIAEREIEQAYDPVRQMFLPDRFIKGECPKCHAKDQYGDSCEVCGTTYQPTDLIHPYSVVSGAAPVRKTSTHYFFRLSDPRCEAFLREWVSGLAQPEATNKMREWLGEAGEAKLADWDISRDAPYFGFEIPGAPGKYFYVWLDAPVGYYASFKNLCQRRGLDFDAWIRKDSTTEQYHFIGKDILYFHTLFWPAMLEFSGHRTPTNVFAHGFLTVDGAKMSKSRGTFITAQSYIDTGLNPEWLRYYFAAKLNATMEDIDLNLEDFQARVNSDLVGKYVNIASRAAGFLLKRFDGRVQASAMNHPLLATLRGAIPQIAAHYEAREYGRALRQTMELADAVNGYVDSAKPWELAKDPANAVALHETCSVSLEAFRLLSLALKPVLPRVAQGVEAFLGIAPLTWADAGTPLSPEQPVRAYQHLMTRVDPKQIDALLAANRGSLQGTAAAAEAGAANGNGAGSKNGKGAKAAAQPAASAANADDGASPIISIDDFAKIDLRIAKIVACQAVEGSDKLLQLTLDVGEERTRNVFSGIKSAYRPEQLVGKLTVMVANLAPRKMKFGLSEGMVLAASAADEKAEPGLYILEPHSGAKPGMRVK</sequence>
<accession>A1V5W0</accession>
<name>SYM_BURMS</name>
<comment type="function">
    <text evidence="1">Is required not only for elongation of protein synthesis but also for the initiation of all mRNA translation through initiator tRNA(fMet) aminoacylation.</text>
</comment>
<comment type="catalytic activity">
    <reaction evidence="1">
        <text>tRNA(Met) + L-methionine + ATP = L-methionyl-tRNA(Met) + AMP + diphosphate</text>
        <dbReference type="Rhea" id="RHEA:13481"/>
        <dbReference type="Rhea" id="RHEA-COMP:9667"/>
        <dbReference type="Rhea" id="RHEA-COMP:9698"/>
        <dbReference type="ChEBI" id="CHEBI:30616"/>
        <dbReference type="ChEBI" id="CHEBI:33019"/>
        <dbReference type="ChEBI" id="CHEBI:57844"/>
        <dbReference type="ChEBI" id="CHEBI:78442"/>
        <dbReference type="ChEBI" id="CHEBI:78530"/>
        <dbReference type="ChEBI" id="CHEBI:456215"/>
        <dbReference type="EC" id="6.1.1.10"/>
    </reaction>
</comment>
<comment type="cofactor">
    <cofactor evidence="1">
        <name>Zn(2+)</name>
        <dbReference type="ChEBI" id="CHEBI:29105"/>
    </cofactor>
    <text evidence="1">Binds 1 zinc ion per subunit.</text>
</comment>
<comment type="subunit">
    <text evidence="1">Homodimer.</text>
</comment>
<comment type="subcellular location">
    <subcellularLocation>
        <location evidence="1">Cytoplasm</location>
    </subcellularLocation>
</comment>
<comment type="similarity">
    <text evidence="1">Belongs to the class-I aminoacyl-tRNA synthetase family. MetG type 1 subfamily.</text>
</comment>
<comment type="sequence caution" evidence="2">
    <conflict type="erroneous initiation">
        <sequence resource="EMBL-CDS" id="ABM49580"/>
    </conflict>
</comment>
<evidence type="ECO:0000255" key="1">
    <source>
        <dbReference type="HAMAP-Rule" id="MF_00098"/>
    </source>
</evidence>
<evidence type="ECO:0000305" key="2"/>
<proteinExistence type="inferred from homology"/>
<reference key="1">
    <citation type="journal article" date="2010" name="Genome Biol. Evol.">
        <title>Continuing evolution of Burkholderia mallei through genome reduction and large-scale rearrangements.</title>
        <authorList>
            <person name="Losada L."/>
            <person name="Ronning C.M."/>
            <person name="DeShazer D."/>
            <person name="Woods D."/>
            <person name="Fedorova N."/>
            <person name="Kim H.S."/>
            <person name="Shabalina S.A."/>
            <person name="Pearson T.R."/>
            <person name="Brinkac L."/>
            <person name="Tan P."/>
            <person name="Nandi T."/>
            <person name="Crabtree J."/>
            <person name="Badger J."/>
            <person name="Beckstrom-Sternberg S."/>
            <person name="Saqib M."/>
            <person name="Schutzer S.E."/>
            <person name="Keim P."/>
            <person name="Nierman W.C."/>
        </authorList>
    </citation>
    <scope>NUCLEOTIDE SEQUENCE [LARGE SCALE GENOMIC DNA]</scope>
    <source>
        <strain>SAVP1</strain>
    </source>
</reference>
<organism>
    <name type="scientific">Burkholderia mallei (strain SAVP1)</name>
    <dbReference type="NCBI Taxonomy" id="320388"/>
    <lineage>
        <taxon>Bacteria</taxon>
        <taxon>Pseudomonadati</taxon>
        <taxon>Pseudomonadota</taxon>
        <taxon>Betaproteobacteria</taxon>
        <taxon>Burkholderiales</taxon>
        <taxon>Burkholderiaceae</taxon>
        <taxon>Burkholderia</taxon>
        <taxon>pseudomallei group</taxon>
    </lineage>
</organism>
<protein>
    <recommendedName>
        <fullName evidence="1">Methionine--tRNA ligase</fullName>
        <ecNumber evidence="1">6.1.1.10</ecNumber>
    </recommendedName>
    <alternativeName>
        <fullName evidence="1">Methionyl-tRNA synthetase</fullName>
        <shortName evidence="1">MetRS</shortName>
    </alternativeName>
</protein>
<gene>
    <name evidence="1" type="primary">metG</name>
    <name type="ordered locus">BMASAVP1_A2304</name>
</gene>
<keyword id="KW-0030">Aminoacyl-tRNA synthetase</keyword>
<keyword id="KW-0067">ATP-binding</keyword>
<keyword id="KW-0963">Cytoplasm</keyword>
<keyword id="KW-0436">Ligase</keyword>
<keyword id="KW-0479">Metal-binding</keyword>
<keyword id="KW-0547">Nucleotide-binding</keyword>
<keyword id="KW-0648">Protein biosynthesis</keyword>
<keyword id="KW-0694">RNA-binding</keyword>
<keyword id="KW-0820">tRNA-binding</keyword>
<keyword id="KW-0862">Zinc</keyword>